<feature type="chain" id="PRO_1000189799" description="Chromosomal replication initiator protein DnaA">
    <location>
        <begin position="1"/>
        <end position="481"/>
    </location>
</feature>
<feature type="region of interest" description="Domain I, interacts with DnaA modulators" evidence="1">
    <location>
        <begin position="1"/>
        <end position="71"/>
    </location>
</feature>
<feature type="region of interest" description="Domain II" evidence="1">
    <location>
        <begin position="71"/>
        <end position="143"/>
    </location>
</feature>
<feature type="region of interest" description="Disordered" evidence="2">
    <location>
        <begin position="86"/>
        <end position="110"/>
    </location>
</feature>
<feature type="region of interest" description="Domain III, AAA+ region" evidence="1">
    <location>
        <begin position="144"/>
        <end position="361"/>
    </location>
</feature>
<feature type="region of interest" description="Domain IV, binds dsDNA" evidence="1">
    <location>
        <begin position="362"/>
        <end position="481"/>
    </location>
</feature>
<feature type="compositionally biased region" description="Low complexity" evidence="2">
    <location>
        <begin position="86"/>
        <end position="96"/>
    </location>
</feature>
<feature type="binding site" evidence="1">
    <location>
        <position position="189"/>
    </location>
    <ligand>
        <name>ATP</name>
        <dbReference type="ChEBI" id="CHEBI:30616"/>
    </ligand>
</feature>
<feature type="binding site" evidence="1">
    <location>
        <position position="191"/>
    </location>
    <ligand>
        <name>ATP</name>
        <dbReference type="ChEBI" id="CHEBI:30616"/>
    </ligand>
</feature>
<feature type="binding site" evidence="1">
    <location>
        <position position="192"/>
    </location>
    <ligand>
        <name>ATP</name>
        <dbReference type="ChEBI" id="CHEBI:30616"/>
    </ligand>
</feature>
<feature type="binding site" evidence="1">
    <location>
        <position position="193"/>
    </location>
    <ligand>
        <name>ATP</name>
        <dbReference type="ChEBI" id="CHEBI:30616"/>
    </ligand>
</feature>
<dbReference type="EMBL" id="CP001154">
    <property type="protein sequence ID" value="ACO76217.1"/>
    <property type="molecule type" value="Genomic_DNA"/>
</dbReference>
<dbReference type="RefSeq" id="WP_012698680.1">
    <property type="nucleotide sequence ID" value="NC_012559.1"/>
</dbReference>
<dbReference type="SMR" id="C1D6I2"/>
<dbReference type="STRING" id="557598.LHK_03240"/>
<dbReference type="KEGG" id="lhk:LHK_03240"/>
<dbReference type="eggNOG" id="COG0593">
    <property type="taxonomic scope" value="Bacteria"/>
</dbReference>
<dbReference type="HOGENOM" id="CLU_026910_0_1_4"/>
<dbReference type="Proteomes" id="UP000002010">
    <property type="component" value="Chromosome"/>
</dbReference>
<dbReference type="GO" id="GO:0005737">
    <property type="term" value="C:cytoplasm"/>
    <property type="evidence" value="ECO:0007669"/>
    <property type="project" value="UniProtKB-SubCell"/>
</dbReference>
<dbReference type="GO" id="GO:0005886">
    <property type="term" value="C:plasma membrane"/>
    <property type="evidence" value="ECO:0007669"/>
    <property type="project" value="TreeGrafter"/>
</dbReference>
<dbReference type="GO" id="GO:0005524">
    <property type="term" value="F:ATP binding"/>
    <property type="evidence" value="ECO:0007669"/>
    <property type="project" value="UniProtKB-UniRule"/>
</dbReference>
<dbReference type="GO" id="GO:0016887">
    <property type="term" value="F:ATP hydrolysis activity"/>
    <property type="evidence" value="ECO:0007669"/>
    <property type="project" value="InterPro"/>
</dbReference>
<dbReference type="GO" id="GO:0003688">
    <property type="term" value="F:DNA replication origin binding"/>
    <property type="evidence" value="ECO:0007669"/>
    <property type="project" value="UniProtKB-UniRule"/>
</dbReference>
<dbReference type="GO" id="GO:0008289">
    <property type="term" value="F:lipid binding"/>
    <property type="evidence" value="ECO:0007669"/>
    <property type="project" value="UniProtKB-KW"/>
</dbReference>
<dbReference type="GO" id="GO:0006270">
    <property type="term" value="P:DNA replication initiation"/>
    <property type="evidence" value="ECO:0007669"/>
    <property type="project" value="UniProtKB-UniRule"/>
</dbReference>
<dbReference type="GO" id="GO:0006275">
    <property type="term" value="P:regulation of DNA replication"/>
    <property type="evidence" value="ECO:0007669"/>
    <property type="project" value="UniProtKB-UniRule"/>
</dbReference>
<dbReference type="CDD" id="cd00009">
    <property type="entry name" value="AAA"/>
    <property type="match status" value="1"/>
</dbReference>
<dbReference type="CDD" id="cd06571">
    <property type="entry name" value="Bac_DnaA_C"/>
    <property type="match status" value="1"/>
</dbReference>
<dbReference type="FunFam" id="1.10.8.60:FF:000003">
    <property type="entry name" value="Chromosomal replication initiator protein DnaA"/>
    <property type="match status" value="1"/>
</dbReference>
<dbReference type="FunFam" id="3.40.50.300:FF:000668">
    <property type="entry name" value="Chromosomal replication initiator protein DnaA"/>
    <property type="match status" value="1"/>
</dbReference>
<dbReference type="Gene3D" id="1.10.1750.10">
    <property type="match status" value="1"/>
</dbReference>
<dbReference type="Gene3D" id="1.10.8.60">
    <property type="match status" value="1"/>
</dbReference>
<dbReference type="Gene3D" id="3.30.300.180">
    <property type="match status" value="1"/>
</dbReference>
<dbReference type="Gene3D" id="3.40.50.300">
    <property type="entry name" value="P-loop containing nucleotide triphosphate hydrolases"/>
    <property type="match status" value="1"/>
</dbReference>
<dbReference type="HAMAP" id="MF_00377">
    <property type="entry name" value="DnaA_bact"/>
    <property type="match status" value="1"/>
</dbReference>
<dbReference type="InterPro" id="IPR003593">
    <property type="entry name" value="AAA+_ATPase"/>
</dbReference>
<dbReference type="InterPro" id="IPR001957">
    <property type="entry name" value="Chromosome_initiator_DnaA"/>
</dbReference>
<dbReference type="InterPro" id="IPR020591">
    <property type="entry name" value="Chromosome_initiator_DnaA-like"/>
</dbReference>
<dbReference type="InterPro" id="IPR018312">
    <property type="entry name" value="Chromosome_initiator_DnaA_CS"/>
</dbReference>
<dbReference type="InterPro" id="IPR013159">
    <property type="entry name" value="DnaA_C"/>
</dbReference>
<dbReference type="InterPro" id="IPR013317">
    <property type="entry name" value="DnaA_dom"/>
</dbReference>
<dbReference type="InterPro" id="IPR024633">
    <property type="entry name" value="DnaA_N_dom"/>
</dbReference>
<dbReference type="InterPro" id="IPR038454">
    <property type="entry name" value="DnaA_N_sf"/>
</dbReference>
<dbReference type="InterPro" id="IPR027417">
    <property type="entry name" value="P-loop_NTPase"/>
</dbReference>
<dbReference type="InterPro" id="IPR010921">
    <property type="entry name" value="Trp_repressor/repl_initiator"/>
</dbReference>
<dbReference type="NCBIfam" id="TIGR00362">
    <property type="entry name" value="DnaA"/>
    <property type="match status" value="1"/>
</dbReference>
<dbReference type="PANTHER" id="PTHR30050">
    <property type="entry name" value="CHROMOSOMAL REPLICATION INITIATOR PROTEIN DNAA"/>
    <property type="match status" value="1"/>
</dbReference>
<dbReference type="PANTHER" id="PTHR30050:SF2">
    <property type="entry name" value="CHROMOSOMAL REPLICATION INITIATOR PROTEIN DNAA"/>
    <property type="match status" value="1"/>
</dbReference>
<dbReference type="Pfam" id="PF00308">
    <property type="entry name" value="Bac_DnaA"/>
    <property type="match status" value="1"/>
</dbReference>
<dbReference type="Pfam" id="PF08299">
    <property type="entry name" value="Bac_DnaA_C"/>
    <property type="match status" value="1"/>
</dbReference>
<dbReference type="Pfam" id="PF11638">
    <property type="entry name" value="DnaA_N"/>
    <property type="match status" value="1"/>
</dbReference>
<dbReference type="PRINTS" id="PR00051">
    <property type="entry name" value="DNAA"/>
</dbReference>
<dbReference type="SMART" id="SM00382">
    <property type="entry name" value="AAA"/>
    <property type="match status" value="1"/>
</dbReference>
<dbReference type="SMART" id="SM00760">
    <property type="entry name" value="Bac_DnaA_C"/>
    <property type="match status" value="1"/>
</dbReference>
<dbReference type="SUPFAM" id="SSF52540">
    <property type="entry name" value="P-loop containing nucleoside triphosphate hydrolases"/>
    <property type="match status" value="1"/>
</dbReference>
<dbReference type="SUPFAM" id="SSF48295">
    <property type="entry name" value="TrpR-like"/>
    <property type="match status" value="1"/>
</dbReference>
<dbReference type="PROSITE" id="PS01008">
    <property type="entry name" value="DNAA"/>
    <property type="match status" value="1"/>
</dbReference>
<evidence type="ECO:0000255" key="1">
    <source>
        <dbReference type="HAMAP-Rule" id="MF_00377"/>
    </source>
</evidence>
<evidence type="ECO:0000256" key="2">
    <source>
        <dbReference type="SAM" id="MobiDB-lite"/>
    </source>
</evidence>
<comment type="function">
    <text evidence="1">Plays an essential role in the initiation and regulation of chromosomal replication. ATP-DnaA binds to the origin of replication (oriC) to initiate formation of the DNA replication initiation complex once per cell cycle. Binds the DnaA box (a 9 base pair repeat at the origin) and separates the double-stranded (ds)DNA. Forms a right-handed helical filament on oriC DNA; dsDNA binds to the exterior of the filament while single-stranded (ss)DNA is stabiized in the filament's interior. The ATP-DnaA-oriC complex binds and stabilizes one strand of the AT-rich DNA unwinding element (DUE), permitting loading of DNA polymerase. After initiation quickly degrades to an ADP-DnaA complex that is not apt for DNA replication. Binds acidic phospholipids.</text>
</comment>
<comment type="subunit">
    <text evidence="1">Oligomerizes as a right-handed, spiral filament on DNA at oriC.</text>
</comment>
<comment type="subcellular location">
    <subcellularLocation>
        <location evidence="1">Cytoplasm</location>
    </subcellularLocation>
</comment>
<comment type="domain">
    <text evidence="1">Domain I is involved in oligomerization and binding regulators, domain II is flexibile and of varying length in different bacteria, domain III forms the AAA+ region, while domain IV binds dsDNA.</text>
</comment>
<comment type="similarity">
    <text evidence="1">Belongs to the DnaA family.</text>
</comment>
<keyword id="KW-0067">ATP-binding</keyword>
<keyword id="KW-0963">Cytoplasm</keyword>
<keyword id="KW-0235">DNA replication</keyword>
<keyword id="KW-0238">DNA-binding</keyword>
<keyword id="KW-0446">Lipid-binding</keyword>
<keyword id="KW-0547">Nucleotide-binding</keyword>
<keyword id="KW-1185">Reference proteome</keyword>
<reference key="1">
    <citation type="journal article" date="2009" name="PLoS Genet.">
        <title>The complete genome and proteome of Laribacter hongkongensis reveal potential mechanisms for adaptations to different temperatures and habitats.</title>
        <authorList>
            <person name="Woo P.C.Y."/>
            <person name="Lau S.K.P."/>
            <person name="Tse H."/>
            <person name="Teng J.L.L."/>
            <person name="Curreem S.O."/>
            <person name="Tsang A.K.L."/>
            <person name="Fan R.Y.Y."/>
            <person name="Wong G.K.M."/>
            <person name="Huang Y."/>
            <person name="Loman N.J."/>
            <person name="Snyder L.A.S."/>
            <person name="Cai J.J."/>
            <person name="Huang J.-D."/>
            <person name="Mak W."/>
            <person name="Pallen M.J."/>
            <person name="Lok S."/>
            <person name="Yuen K.-Y."/>
        </authorList>
    </citation>
    <scope>NUCLEOTIDE SEQUENCE [LARGE SCALE GENOMIC DNA]</scope>
    <source>
        <strain>HLHK9</strain>
    </source>
</reference>
<gene>
    <name evidence="1" type="primary">dnaA</name>
    <name type="ordered locus">LHK_03240</name>
</gene>
<organism>
    <name type="scientific">Laribacter hongkongensis (strain HLHK9)</name>
    <dbReference type="NCBI Taxonomy" id="557598"/>
    <lineage>
        <taxon>Bacteria</taxon>
        <taxon>Pseudomonadati</taxon>
        <taxon>Pseudomonadota</taxon>
        <taxon>Betaproteobacteria</taxon>
        <taxon>Neisseriales</taxon>
        <taxon>Aquaspirillaceae</taxon>
        <taxon>Laribacter</taxon>
    </lineage>
</organism>
<sequence>MTDLSAFWPQCLARFEAELSAQQFNTWIKPLVCVAGEDAIALYAANRFSLGFVKERFLSRIETFAEDILGRPVTIELRIGGAQAGASAPAAASPRSPGRPAPAPVAATPTTGSLADSIVSDVPLPNVKLTAPKPAIGGGHESTRLNPAFTFESLVTGKGNQLARAAALQIADNPGDSTYNPFFVYGGVGLGKTHLIQAIGNHVYQKNPQAKIRYIHAERYVADIMRAYQHKAFDEFKRYYHSLDLLLIDDIQFFAGKNRTMEEFFYAFNALLEGGKQVIMTCDSYPKQIEGMDERLISRFSWGLTVEIQPPELEMRVAILMKKAEADNLKLGNDVAFFIAQNVRSNVRELEGALKRVVAYSRFSNQPISLDLVKEALKDILAAGNRQISVDNIQKTVADYYKIKLSDMHSKKRSRDIARPRQVAMALAKELTSMSLPNIGDAFGGRDHTTVLHACKTIAEMRESDPDISRDYAALQQMLRN</sequence>
<proteinExistence type="inferred from homology"/>
<protein>
    <recommendedName>
        <fullName evidence="1">Chromosomal replication initiator protein DnaA</fullName>
    </recommendedName>
</protein>
<accession>C1D6I2</accession>
<name>DNAA_LARHH</name>